<comment type="function">
    <text evidence="1">One of the primary rRNA binding proteins, this protein initially binds near the 5'-end of the 23S rRNA. It is important during the early stages of 50S assembly. It makes multiple contacts with different domains of the 23S rRNA in the assembled 50S subunit and ribosome.</text>
</comment>
<comment type="function">
    <text evidence="1">Forms part of the polypeptide exit tunnel.</text>
</comment>
<comment type="subunit">
    <text evidence="1">Part of the 50S ribosomal subunit.</text>
</comment>
<comment type="similarity">
    <text evidence="1">Belongs to the universal ribosomal protein uL4 family.</text>
</comment>
<protein>
    <recommendedName>
        <fullName evidence="1">Large ribosomal subunit protein uL4</fullName>
    </recommendedName>
    <alternativeName>
        <fullName evidence="3">50S ribosomal protein L4</fullName>
    </alternativeName>
</protein>
<keyword id="KW-0687">Ribonucleoprotein</keyword>
<keyword id="KW-0689">Ribosomal protein</keyword>
<keyword id="KW-0694">RNA-binding</keyword>
<keyword id="KW-0699">rRNA-binding</keyword>
<sequence length="207" mass="22857">MPKINILNQQGDFVSEKVLATTVFDIKPNQQVLYDVVNAQRAAMRQGTHATKTRALVAGGGKKPWRQKGTGRARHGSIRSPLWRGGGVTFGPSPRDYSVKVNQKVRSLALKSALSLQAKNNQLVVVDNINLATHKTKDFQQMLQKLNITSKSLIVVTQMTEQLALASRNLSYITLETASHASVYQILNCKQLVLTAAAVNYFEEVLK</sequence>
<feature type="chain" id="PRO_0000129252" description="Large ribosomal subunit protein uL4">
    <location>
        <begin position="1"/>
        <end position="207"/>
    </location>
</feature>
<feature type="region of interest" description="Disordered" evidence="2">
    <location>
        <begin position="57"/>
        <end position="78"/>
    </location>
</feature>
<feature type="compositionally biased region" description="Basic residues" evidence="2">
    <location>
        <begin position="63"/>
        <end position="77"/>
    </location>
</feature>
<name>RL4_ONYPE</name>
<accession>P61067</accession>
<organism>
    <name type="scientific">Onion yellows phytoplasma (strain OY-M)</name>
    <dbReference type="NCBI Taxonomy" id="262768"/>
    <lineage>
        <taxon>Bacteria</taxon>
        <taxon>Bacillati</taxon>
        <taxon>Mycoplasmatota</taxon>
        <taxon>Mollicutes</taxon>
        <taxon>Acholeplasmatales</taxon>
        <taxon>Acholeplasmataceae</taxon>
        <taxon>Candidatus Phytoplasma</taxon>
        <taxon>16SrI (Aster yellows group)</taxon>
    </lineage>
</organism>
<evidence type="ECO:0000255" key="1">
    <source>
        <dbReference type="HAMAP-Rule" id="MF_01328"/>
    </source>
</evidence>
<evidence type="ECO:0000256" key="2">
    <source>
        <dbReference type="SAM" id="MobiDB-lite"/>
    </source>
</evidence>
<evidence type="ECO:0000305" key="3"/>
<dbReference type="EMBL" id="AP006628">
    <property type="protein sequence ID" value="BAD04286.1"/>
    <property type="molecule type" value="Genomic_DNA"/>
</dbReference>
<dbReference type="SMR" id="P61067"/>
<dbReference type="STRING" id="262768.PAM_201"/>
<dbReference type="KEGG" id="poy:PAM_201"/>
<dbReference type="eggNOG" id="COG0088">
    <property type="taxonomic scope" value="Bacteria"/>
</dbReference>
<dbReference type="HOGENOM" id="CLU_041575_5_2_14"/>
<dbReference type="BioCyc" id="OYEL262768:G1G26-247-MONOMER"/>
<dbReference type="Proteomes" id="UP000002523">
    <property type="component" value="Chromosome"/>
</dbReference>
<dbReference type="GO" id="GO:1990904">
    <property type="term" value="C:ribonucleoprotein complex"/>
    <property type="evidence" value="ECO:0007669"/>
    <property type="project" value="UniProtKB-KW"/>
</dbReference>
<dbReference type="GO" id="GO:0005840">
    <property type="term" value="C:ribosome"/>
    <property type="evidence" value="ECO:0007669"/>
    <property type="project" value="UniProtKB-KW"/>
</dbReference>
<dbReference type="GO" id="GO:0019843">
    <property type="term" value="F:rRNA binding"/>
    <property type="evidence" value="ECO:0007669"/>
    <property type="project" value="UniProtKB-UniRule"/>
</dbReference>
<dbReference type="GO" id="GO:0003735">
    <property type="term" value="F:structural constituent of ribosome"/>
    <property type="evidence" value="ECO:0007669"/>
    <property type="project" value="InterPro"/>
</dbReference>
<dbReference type="GO" id="GO:0006412">
    <property type="term" value="P:translation"/>
    <property type="evidence" value="ECO:0007669"/>
    <property type="project" value="UniProtKB-UniRule"/>
</dbReference>
<dbReference type="Gene3D" id="3.40.1370.10">
    <property type="match status" value="1"/>
</dbReference>
<dbReference type="HAMAP" id="MF_01328_B">
    <property type="entry name" value="Ribosomal_uL4_B"/>
    <property type="match status" value="1"/>
</dbReference>
<dbReference type="InterPro" id="IPR002136">
    <property type="entry name" value="Ribosomal_uL4"/>
</dbReference>
<dbReference type="InterPro" id="IPR013005">
    <property type="entry name" value="Ribosomal_uL4-like"/>
</dbReference>
<dbReference type="InterPro" id="IPR023574">
    <property type="entry name" value="Ribosomal_uL4_dom_sf"/>
</dbReference>
<dbReference type="NCBIfam" id="TIGR03953">
    <property type="entry name" value="rplD_bact"/>
    <property type="match status" value="1"/>
</dbReference>
<dbReference type="PANTHER" id="PTHR10746">
    <property type="entry name" value="50S RIBOSOMAL PROTEIN L4"/>
    <property type="match status" value="1"/>
</dbReference>
<dbReference type="PANTHER" id="PTHR10746:SF6">
    <property type="entry name" value="LARGE RIBOSOMAL SUBUNIT PROTEIN UL4M"/>
    <property type="match status" value="1"/>
</dbReference>
<dbReference type="Pfam" id="PF00573">
    <property type="entry name" value="Ribosomal_L4"/>
    <property type="match status" value="1"/>
</dbReference>
<dbReference type="SUPFAM" id="SSF52166">
    <property type="entry name" value="Ribosomal protein L4"/>
    <property type="match status" value="1"/>
</dbReference>
<reference key="1">
    <citation type="journal article" date="2004" name="Nat. Genet.">
        <title>Reductive evolution suggested from the complete genome sequence of a plant-pathogenic phytoplasma.</title>
        <authorList>
            <person name="Oshima K."/>
            <person name="Kakizawa S."/>
            <person name="Nishigawa H."/>
            <person name="Jung H.-Y."/>
            <person name="Wei W."/>
            <person name="Suzuki S."/>
            <person name="Arashida R."/>
            <person name="Nakata D."/>
            <person name="Miyata S."/>
            <person name="Ugaki M."/>
            <person name="Namba S."/>
        </authorList>
    </citation>
    <scope>NUCLEOTIDE SEQUENCE [LARGE SCALE GENOMIC DNA]</scope>
    <source>
        <strain>OY-M</strain>
    </source>
</reference>
<proteinExistence type="inferred from homology"/>
<gene>
    <name evidence="1" type="primary">rplD</name>
    <name type="ordered locus">PAM_201</name>
</gene>